<organism>
    <name type="scientific">Dictyostelium discoideum</name>
    <name type="common">Social amoeba</name>
    <dbReference type="NCBI Taxonomy" id="44689"/>
    <lineage>
        <taxon>Eukaryota</taxon>
        <taxon>Amoebozoa</taxon>
        <taxon>Evosea</taxon>
        <taxon>Eumycetozoa</taxon>
        <taxon>Dictyostelia</taxon>
        <taxon>Dictyosteliales</taxon>
        <taxon>Dictyosteliaceae</taxon>
        <taxon>Dictyostelium</taxon>
    </lineage>
</organism>
<protein>
    <recommendedName>
        <fullName>Isocitrate dehydrogenase [NAD] regulatory subunit B, mitochondrial</fullName>
        <ecNumber>1.1.1.41</ecNumber>
    </recommendedName>
</protein>
<gene>
    <name type="primary">idhB</name>
    <name type="ORF">DDB_G0293872</name>
</gene>
<sequence length="360" mass="38688">MLGRLRTVVKASSSNSIRNYLGYTSGVQKKTVTVIPGDGIGPEITSSVMGVFQAAKVPIEWEIFDISGGQPISQELIASITRNKVALKGPLYTEILSGSQSRNMELRKALDLYAHVVPCKQIPGITARHDDVLVDFVVIRENTQGEYSGLEQVLTPGVVQSLKIITKEASERIARYAFEYAKANGRKKVTAVHKANIQKQTDGLFLATCTQIAKEYPEIKFENTIIDNCCMQLVKSPEQYDVMVTPNLYGNIVSNIGAALVGGPGLAGGANVGEGSIIFEMGAHHVAADIAGKDKANPTGLLLASVMMLKHLGLNEHATKVENAVKAVIKEGTLTSDIGGKSSTKQFTGAVIDYIEKNQN</sequence>
<accession>Q54B68</accession>
<comment type="function">
    <text evidence="1">Performs an essential role in the oxidative function of the citric acid cycle.</text>
</comment>
<comment type="catalytic activity">
    <reaction>
        <text>D-threo-isocitrate + NAD(+) = 2-oxoglutarate + CO2 + NADH</text>
        <dbReference type="Rhea" id="RHEA:23632"/>
        <dbReference type="ChEBI" id="CHEBI:15562"/>
        <dbReference type="ChEBI" id="CHEBI:16526"/>
        <dbReference type="ChEBI" id="CHEBI:16810"/>
        <dbReference type="ChEBI" id="CHEBI:57540"/>
        <dbReference type="ChEBI" id="CHEBI:57945"/>
        <dbReference type="EC" id="1.1.1.41"/>
    </reaction>
</comment>
<comment type="cofactor">
    <cofactor evidence="1">
        <name>Mg(2+)</name>
        <dbReference type="ChEBI" id="CHEBI:18420"/>
    </cofactor>
    <cofactor evidence="1">
        <name>Mn(2+)</name>
        <dbReference type="ChEBI" id="CHEBI:29035"/>
    </cofactor>
    <text evidence="1">Binds 1 Mg(2+) or Mn(2+) ion per subunit.</text>
</comment>
<comment type="subunit">
    <text>Heterooligomer of catalytic and regulatory subunits.</text>
</comment>
<comment type="subcellular location">
    <subcellularLocation>
        <location evidence="1">Mitochondrion</location>
    </subcellularLocation>
</comment>
<comment type="similarity">
    <text evidence="4">Belongs to the isocitrate and isopropylmalate dehydrogenases family.</text>
</comment>
<reference key="1">
    <citation type="journal article" date="2005" name="Nature">
        <title>The genome of the social amoeba Dictyostelium discoideum.</title>
        <authorList>
            <person name="Eichinger L."/>
            <person name="Pachebat J.A."/>
            <person name="Gloeckner G."/>
            <person name="Rajandream M.A."/>
            <person name="Sucgang R."/>
            <person name="Berriman M."/>
            <person name="Song J."/>
            <person name="Olsen R."/>
            <person name="Szafranski K."/>
            <person name="Xu Q."/>
            <person name="Tunggal B."/>
            <person name="Kummerfeld S."/>
            <person name="Madera M."/>
            <person name="Konfortov B.A."/>
            <person name="Rivero F."/>
            <person name="Bankier A.T."/>
            <person name="Lehmann R."/>
            <person name="Hamlin N."/>
            <person name="Davies R."/>
            <person name="Gaudet P."/>
            <person name="Fey P."/>
            <person name="Pilcher K."/>
            <person name="Chen G."/>
            <person name="Saunders D."/>
            <person name="Sodergren E.J."/>
            <person name="Davis P."/>
            <person name="Kerhornou A."/>
            <person name="Nie X."/>
            <person name="Hall N."/>
            <person name="Anjard C."/>
            <person name="Hemphill L."/>
            <person name="Bason N."/>
            <person name="Farbrother P."/>
            <person name="Desany B."/>
            <person name="Just E."/>
            <person name="Morio T."/>
            <person name="Rost R."/>
            <person name="Churcher C.M."/>
            <person name="Cooper J."/>
            <person name="Haydock S."/>
            <person name="van Driessche N."/>
            <person name="Cronin A."/>
            <person name="Goodhead I."/>
            <person name="Muzny D.M."/>
            <person name="Mourier T."/>
            <person name="Pain A."/>
            <person name="Lu M."/>
            <person name="Harper D."/>
            <person name="Lindsay R."/>
            <person name="Hauser H."/>
            <person name="James K.D."/>
            <person name="Quiles M."/>
            <person name="Madan Babu M."/>
            <person name="Saito T."/>
            <person name="Buchrieser C."/>
            <person name="Wardroper A."/>
            <person name="Felder M."/>
            <person name="Thangavelu M."/>
            <person name="Johnson D."/>
            <person name="Knights A."/>
            <person name="Loulseged H."/>
            <person name="Mungall K.L."/>
            <person name="Oliver K."/>
            <person name="Price C."/>
            <person name="Quail M.A."/>
            <person name="Urushihara H."/>
            <person name="Hernandez J."/>
            <person name="Rabbinowitsch E."/>
            <person name="Steffen D."/>
            <person name="Sanders M."/>
            <person name="Ma J."/>
            <person name="Kohara Y."/>
            <person name="Sharp S."/>
            <person name="Simmonds M.N."/>
            <person name="Spiegler S."/>
            <person name="Tivey A."/>
            <person name="Sugano S."/>
            <person name="White B."/>
            <person name="Walker D."/>
            <person name="Woodward J.R."/>
            <person name="Winckler T."/>
            <person name="Tanaka Y."/>
            <person name="Shaulsky G."/>
            <person name="Schleicher M."/>
            <person name="Weinstock G.M."/>
            <person name="Rosenthal A."/>
            <person name="Cox E.C."/>
            <person name="Chisholm R.L."/>
            <person name="Gibbs R.A."/>
            <person name="Loomis W.F."/>
            <person name="Platzer M."/>
            <person name="Kay R.R."/>
            <person name="Williams J.G."/>
            <person name="Dear P.H."/>
            <person name="Noegel A.A."/>
            <person name="Barrell B.G."/>
            <person name="Kuspa A."/>
        </authorList>
    </citation>
    <scope>NUCLEOTIDE SEQUENCE [LARGE SCALE GENOMIC DNA]</scope>
    <source>
        <strain>AX4</strain>
    </source>
</reference>
<proteinExistence type="inferred from homology"/>
<name>IDHB_DICDI</name>
<evidence type="ECO:0000250" key="1"/>
<evidence type="ECO:0000250" key="2">
    <source>
        <dbReference type="UniProtKB" id="P50213"/>
    </source>
</evidence>
<evidence type="ECO:0000255" key="3"/>
<evidence type="ECO:0000305" key="4"/>
<feature type="transit peptide" description="Mitochondrion" evidence="3">
    <location>
        <begin position="1"/>
        <end position="113"/>
    </location>
</feature>
<feature type="chain" id="PRO_0000328019" description="Isocitrate dehydrogenase [NAD] regulatory subunit B, mitochondrial">
    <location>
        <begin position="114"/>
        <end position="360"/>
    </location>
</feature>
<feature type="binding site" evidence="1">
    <location>
        <position position="101"/>
    </location>
    <ligand>
        <name>substrate</name>
    </ligand>
</feature>
<feature type="binding site" evidence="1">
    <location>
        <position position="103"/>
    </location>
    <ligand>
        <name>substrate</name>
    </ligand>
</feature>
<feature type="binding site" evidence="1">
    <location>
        <position position="107"/>
    </location>
    <ligand>
        <name>substrate</name>
    </ligand>
</feature>
<feature type="binding site" evidence="1">
    <location>
        <position position="140"/>
    </location>
    <ligand>
        <name>substrate</name>
    </ligand>
</feature>
<feature type="binding site" evidence="2">
    <location>
        <position position="227"/>
    </location>
    <ligand>
        <name>Mg(2+)</name>
        <dbReference type="ChEBI" id="CHEBI:18420"/>
    </ligand>
</feature>
<feature type="binding site" evidence="1">
    <location>
        <begin position="284"/>
        <end position="290"/>
    </location>
    <ligand>
        <name>NADP(+)</name>
        <dbReference type="ChEBI" id="CHEBI:58349"/>
    </ligand>
</feature>
<feature type="binding site" evidence="1">
    <location>
        <position position="297"/>
    </location>
    <ligand>
        <name>NADP(+)</name>
        <dbReference type="ChEBI" id="CHEBI:58349"/>
    </ligand>
</feature>
<feature type="site" description="Critical for catalysis" evidence="1">
    <location>
        <position position="147"/>
    </location>
</feature>
<feature type="site" description="Critical for catalysis" evidence="1">
    <location>
        <position position="194"/>
    </location>
</feature>
<keyword id="KW-0460">Magnesium</keyword>
<keyword id="KW-0464">Manganese</keyword>
<keyword id="KW-0479">Metal-binding</keyword>
<keyword id="KW-0496">Mitochondrion</keyword>
<keyword id="KW-0520">NAD</keyword>
<keyword id="KW-0560">Oxidoreductase</keyword>
<keyword id="KW-1185">Reference proteome</keyword>
<keyword id="KW-0809">Transit peptide</keyword>
<keyword id="KW-0816">Tricarboxylic acid cycle</keyword>
<dbReference type="EC" id="1.1.1.41"/>
<dbReference type="EMBL" id="AAFI02000223">
    <property type="protein sequence ID" value="EAL60507.1"/>
    <property type="molecule type" value="Genomic_DNA"/>
</dbReference>
<dbReference type="RefSeq" id="XP_628920.1">
    <property type="nucleotide sequence ID" value="XM_628918.1"/>
</dbReference>
<dbReference type="SMR" id="Q54B68"/>
<dbReference type="FunCoup" id="Q54B68">
    <property type="interactions" value="320"/>
</dbReference>
<dbReference type="STRING" id="44689.Q54B68"/>
<dbReference type="PaxDb" id="44689-DDB0231294"/>
<dbReference type="EnsemblProtists" id="EAL60507">
    <property type="protein sequence ID" value="EAL60507"/>
    <property type="gene ID" value="DDB_G0293872"/>
</dbReference>
<dbReference type="GeneID" id="8629462"/>
<dbReference type="KEGG" id="ddi:DDB_G0293872"/>
<dbReference type="dictyBase" id="DDB_G0293872">
    <property type="gene designation" value="idhB"/>
</dbReference>
<dbReference type="VEuPathDB" id="AmoebaDB:DDB_G0293872"/>
<dbReference type="eggNOG" id="KOG0785">
    <property type="taxonomic scope" value="Eukaryota"/>
</dbReference>
<dbReference type="HOGENOM" id="CLU_031953_0_0_1"/>
<dbReference type="InParanoid" id="Q54B68"/>
<dbReference type="OMA" id="TCAHKAN"/>
<dbReference type="PhylomeDB" id="Q54B68"/>
<dbReference type="Reactome" id="R-DDI-71403">
    <property type="pathway name" value="Citric acid cycle (TCA cycle)"/>
</dbReference>
<dbReference type="PRO" id="PR:Q54B68"/>
<dbReference type="Proteomes" id="UP000002195">
    <property type="component" value="Chromosome 6"/>
</dbReference>
<dbReference type="GO" id="GO:0005739">
    <property type="term" value="C:mitochondrion"/>
    <property type="evidence" value="ECO:0000250"/>
    <property type="project" value="UniProtKB"/>
</dbReference>
<dbReference type="GO" id="GO:0045335">
    <property type="term" value="C:phagocytic vesicle"/>
    <property type="evidence" value="ECO:0007005"/>
    <property type="project" value="dictyBase"/>
</dbReference>
<dbReference type="GO" id="GO:0004449">
    <property type="term" value="F:isocitrate dehydrogenase (NAD+) activity"/>
    <property type="evidence" value="ECO:0000250"/>
    <property type="project" value="UniProtKB"/>
</dbReference>
<dbReference type="GO" id="GO:0000287">
    <property type="term" value="F:magnesium ion binding"/>
    <property type="evidence" value="ECO:0007669"/>
    <property type="project" value="InterPro"/>
</dbReference>
<dbReference type="GO" id="GO:0051287">
    <property type="term" value="F:NAD binding"/>
    <property type="evidence" value="ECO:0007669"/>
    <property type="project" value="InterPro"/>
</dbReference>
<dbReference type="GO" id="GO:0006102">
    <property type="term" value="P:isocitrate metabolic process"/>
    <property type="evidence" value="ECO:0000250"/>
    <property type="project" value="UniProtKB"/>
</dbReference>
<dbReference type="GO" id="GO:0006099">
    <property type="term" value="P:tricarboxylic acid cycle"/>
    <property type="evidence" value="ECO:0000318"/>
    <property type="project" value="GO_Central"/>
</dbReference>
<dbReference type="FunFam" id="3.40.718.10:FF:000014">
    <property type="entry name" value="Isocitrate dehydrogenase (NAD(+))"/>
    <property type="match status" value="1"/>
</dbReference>
<dbReference type="Gene3D" id="3.40.718.10">
    <property type="entry name" value="Isopropylmalate Dehydrogenase"/>
    <property type="match status" value="1"/>
</dbReference>
<dbReference type="InterPro" id="IPR019818">
    <property type="entry name" value="IsoCit/isopropylmalate_DH_CS"/>
</dbReference>
<dbReference type="InterPro" id="IPR004434">
    <property type="entry name" value="Isocitrate_DH_NAD"/>
</dbReference>
<dbReference type="InterPro" id="IPR024084">
    <property type="entry name" value="IsoPropMal-DH-like_dom"/>
</dbReference>
<dbReference type="NCBIfam" id="TIGR00175">
    <property type="entry name" value="mito_nad_idh"/>
    <property type="match status" value="1"/>
</dbReference>
<dbReference type="PANTHER" id="PTHR11835">
    <property type="entry name" value="DECARBOXYLATING DEHYDROGENASES-ISOCITRATE, ISOPROPYLMALATE, TARTRATE"/>
    <property type="match status" value="1"/>
</dbReference>
<dbReference type="PANTHER" id="PTHR11835:SF42">
    <property type="entry name" value="ISOCITRATE DEHYDROGENASE [NAD] SUBUNIT BETA, MITOCHONDRIAL"/>
    <property type="match status" value="1"/>
</dbReference>
<dbReference type="Pfam" id="PF00180">
    <property type="entry name" value="Iso_dh"/>
    <property type="match status" value="1"/>
</dbReference>
<dbReference type="SMART" id="SM01329">
    <property type="entry name" value="Iso_dh"/>
    <property type="match status" value="1"/>
</dbReference>
<dbReference type="SUPFAM" id="SSF53659">
    <property type="entry name" value="Isocitrate/Isopropylmalate dehydrogenase-like"/>
    <property type="match status" value="1"/>
</dbReference>
<dbReference type="PROSITE" id="PS00470">
    <property type="entry name" value="IDH_IMDH"/>
    <property type="match status" value="1"/>
</dbReference>